<organism>
    <name type="scientific">Bifidobacterium longum (strain NCC 2705)</name>
    <dbReference type="NCBI Taxonomy" id="206672"/>
    <lineage>
        <taxon>Bacteria</taxon>
        <taxon>Bacillati</taxon>
        <taxon>Actinomycetota</taxon>
        <taxon>Actinomycetes</taxon>
        <taxon>Bifidobacteriales</taxon>
        <taxon>Bifidobacteriaceae</taxon>
        <taxon>Bifidobacterium</taxon>
    </lineage>
</organism>
<sequence>MTNVQRSRRQVRLSRALGIALTPKAQRIFEKRPYAPGEHGRDRRRTESDYAVRMREKQRLRAQYGISEKQLRAAYEKATRTAGQTGNAMLTDLETRLDNLVLRAGFARTTAQARQFVVHRHILVDGNIVDRPSYRVKPGQTIQVKAKSQTMVPFQIAAEGVHRDVLPAVPGYLDVNLPSLKATVTRKPEVEEIPVQVNIQYVVEFYAR</sequence>
<dbReference type="EMBL" id="AE014295">
    <property type="protein sequence ID" value="AAN24699.1"/>
    <property type="molecule type" value="Genomic_DNA"/>
</dbReference>
<dbReference type="RefSeq" id="NP_696063.1">
    <property type="nucleotide sequence ID" value="NC_004307.2"/>
</dbReference>
<dbReference type="RefSeq" id="WP_007052130.1">
    <property type="nucleotide sequence ID" value="NC_004307.2"/>
</dbReference>
<dbReference type="SMR" id="P59127"/>
<dbReference type="STRING" id="206672.BL0886"/>
<dbReference type="EnsemblBacteria" id="AAN24699">
    <property type="protein sequence ID" value="AAN24699"/>
    <property type="gene ID" value="BL0886"/>
</dbReference>
<dbReference type="GeneID" id="69577973"/>
<dbReference type="KEGG" id="blo:BL0886"/>
<dbReference type="PATRIC" id="fig|206672.9.peg.583"/>
<dbReference type="HOGENOM" id="CLU_092403_0_3_11"/>
<dbReference type="OrthoDB" id="9803672at2"/>
<dbReference type="PhylomeDB" id="P59127"/>
<dbReference type="Proteomes" id="UP000000439">
    <property type="component" value="Chromosome"/>
</dbReference>
<dbReference type="GO" id="GO:0015935">
    <property type="term" value="C:small ribosomal subunit"/>
    <property type="evidence" value="ECO:0007669"/>
    <property type="project" value="InterPro"/>
</dbReference>
<dbReference type="GO" id="GO:0019843">
    <property type="term" value="F:rRNA binding"/>
    <property type="evidence" value="ECO:0007669"/>
    <property type="project" value="UniProtKB-UniRule"/>
</dbReference>
<dbReference type="GO" id="GO:0003735">
    <property type="term" value="F:structural constituent of ribosome"/>
    <property type="evidence" value="ECO:0007669"/>
    <property type="project" value="InterPro"/>
</dbReference>
<dbReference type="GO" id="GO:0042274">
    <property type="term" value="P:ribosomal small subunit biogenesis"/>
    <property type="evidence" value="ECO:0007669"/>
    <property type="project" value="TreeGrafter"/>
</dbReference>
<dbReference type="GO" id="GO:0006412">
    <property type="term" value="P:translation"/>
    <property type="evidence" value="ECO:0007669"/>
    <property type="project" value="UniProtKB-UniRule"/>
</dbReference>
<dbReference type="CDD" id="cd00165">
    <property type="entry name" value="S4"/>
    <property type="match status" value="1"/>
</dbReference>
<dbReference type="FunFam" id="3.10.290.10:FF:000001">
    <property type="entry name" value="30S ribosomal protein S4"/>
    <property type="match status" value="1"/>
</dbReference>
<dbReference type="Gene3D" id="1.10.1050.10">
    <property type="entry name" value="Ribosomal Protein S4 Delta 41, Chain A, domain 1"/>
    <property type="match status" value="1"/>
</dbReference>
<dbReference type="Gene3D" id="3.10.290.10">
    <property type="entry name" value="RNA-binding S4 domain"/>
    <property type="match status" value="1"/>
</dbReference>
<dbReference type="HAMAP" id="MF_01306_B">
    <property type="entry name" value="Ribosomal_uS4_B"/>
    <property type="match status" value="1"/>
</dbReference>
<dbReference type="InterPro" id="IPR022801">
    <property type="entry name" value="Ribosomal_uS4"/>
</dbReference>
<dbReference type="InterPro" id="IPR005709">
    <property type="entry name" value="Ribosomal_uS4_bac-type"/>
</dbReference>
<dbReference type="InterPro" id="IPR018079">
    <property type="entry name" value="Ribosomal_uS4_CS"/>
</dbReference>
<dbReference type="InterPro" id="IPR001912">
    <property type="entry name" value="Ribosomal_uS4_N"/>
</dbReference>
<dbReference type="InterPro" id="IPR002942">
    <property type="entry name" value="S4_RNA-bd"/>
</dbReference>
<dbReference type="InterPro" id="IPR036986">
    <property type="entry name" value="S4_RNA-bd_sf"/>
</dbReference>
<dbReference type="NCBIfam" id="NF003717">
    <property type="entry name" value="PRK05327.1"/>
    <property type="match status" value="1"/>
</dbReference>
<dbReference type="NCBIfam" id="TIGR01017">
    <property type="entry name" value="rpsD_bact"/>
    <property type="match status" value="1"/>
</dbReference>
<dbReference type="PANTHER" id="PTHR11831">
    <property type="entry name" value="30S 40S RIBOSOMAL PROTEIN"/>
    <property type="match status" value="1"/>
</dbReference>
<dbReference type="PANTHER" id="PTHR11831:SF4">
    <property type="entry name" value="SMALL RIBOSOMAL SUBUNIT PROTEIN US4M"/>
    <property type="match status" value="1"/>
</dbReference>
<dbReference type="Pfam" id="PF00163">
    <property type="entry name" value="Ribosomal_S4"/>
    <property type="match status" value="1"/>
</dbReference>
<dbReference type="Pfam" id="PF01479">
    <property type="entry name" value="S4"/>
    <property type="match status" value="1"/>
</dbReference>
<dbReference type="SMART" id="SM01390">
    <property type="entry name" value="Ribosomal_S4"/>
    <property type="match status" value="1"/>
</dbReference>
<dbReference type="SMART" id="SM00363">
    <property type="entry name" value="S4"/>
    <property type="match status" value="1"/>
</dbReference>
<dbReference type="SUPFAM" id="SSF55174">
    <property type="entry name" value="Alpha-L RNA-binding motif"/>
    <property type="match status" value="1"/>
</dbReference>
<dbReference type="PROSITE" id="PS00632">
    <property type="entry name" value="RIBOSOMAL_S4"/>
    <property type="match status" value="1"/>
</dbReference>
<dbReference type="PROSITE" id="PS50889">
    <property type="entry name" value="S4"/>
    <property type="match status" value="1"/>
</dbReference>
<reference key="1">
    <citation type="journal article" date="2002" name="Proc. Natl. Acad. Sci. U.S.A.">
        <title>The genome sequence of Bifidobacterium longum reflects its adaptation to the human gastrointestinal tract.</title>
        <authorList>
            <person name="Schell M.A."/>
            <person name="Karmirantzou M."/>
            <person name="Snel B."/>
            <person name="Vilanova D."/>
            <person name="Berger B."/>
            <person name="Pessi G."/>
            <person name="Zwahlen M.-C."/>
            <person name="Desiere F."/>
            <person name="Bork P."/>
            <person name="Delley M."/>
            <person name="Pridmore R.D."/>
            <person name="Arigoni F."/>
        </authorList>
    </citation>
    <scope>NUCLEOTIDE SEQUENCE [LARGE SCALE GENOMIC DNA]</scope>
    <source>
        <strain>NCC 2705</strain>
    </source>
</reference>
<feature type="chain" id="PRO_0000132344" description="Small ribosomal subunit protein uS4">
    <location>
        <begin position="1"/>
        <end position="208"/>
    </location>
</feature>
<feature type="domain" description="S4 RNA-binding" evidence="1">
    <location>
        <begin position="95"/>
        <end position="161"/>
    </location>
</feature>
<feature type="region of interest" description="Disordered" evidence="2">
    <location>
        <begin position="30"/>
        <end position="49"/>
    </location>
</feature>
<accession>P59127</accession>
<proteinExistence type="inferred from homology"/>
<protein>
    <recommendedName>
        <fullName evidence="1">Small ribosomal subunit protein uS4</fullName>
    </recommendedName>
    <alternativeName>
        <fullName evidence="3">30S ribosomal protein S4</fullName>
    </alternativeName>
</protein>
<comment type="function">
    <text evidence="1">One of the primary rRNA binding proteins, it binds directly to 16S rRNA where it nucleates assembly of the body of the 30S subunit.</text>
</comment>
<comment type="function">
    <text evidence="1">With S5 and S12 plays an important role in translational accuracy.</text>
</comment>
<comment type="subunit">
    <text evidence="1">Part of the 30S ribosomal subunit. Contacts protein S5. The interaction surface between S4 and S5 is involved in control of translational fidelity.</text>
</comment>
<comment type="similarity">
    <text evidence="1">Belongs to the universal ribosomal protein uS4 family.</text>
</comment>
<keyword id="KW-1185">Reference proteome</keyword>
<keyword id="KW-0687">Ribonucleoprotein</keyword>
<keyword id="KW-0689">Ribosomal protein</keyword>
<keyword id="KW-0694">RNA-binding</keyword>
<keyword id="KW-0699">rRNA-binding</keyword>
<evidence type="ECO:0000255" key="1">
    <source>
        <dbReference type="HAMAP-Rule" id="MF_01306"/>
    </source>
</evidence>
<evidence type="ECO:0000256" key="2">
    <source>
        <dbReference type="SAM" id="MobiDB-lite"/>
    </source>
</evidence>
<evidence type="ECO:0000305" key="3"/>
<gene>
    <name evidence="1" type="primary">rpsD</name>
    <name type="ordered locus">BL0886</name>
</gene>
<name>RS4_BIFLO</name>